<protein>
    <recommendedName>
        <fullName>Transcriptional regulator MraZ</fullName>
    </recommendedName>
</protein>
<sequence length="153" mass="17292">MAGFIGKEKHAVDEKGRLMIPARFRRKFPETSGSLASKKEPASLYVMKSPDSSLELYLPDVWEEMARTISALSDFHPDERLLKTLMYESLEMVELDRQGRIPLSREFLDHAGITRDVVIIGADTKMIVWEPGRLSEVLEGSSGRFAALAGRYF</sequence>
<proteinExistence type="inferred from homology"/>
<reference key="1">
    <citation type="submission" date="2005-08" db="EMBL/GenBank/DDBJ databases">
        <title>Complete sequence of Pelodictyon luteolum DSM 273.</title>
        <authorList>
            <consortium name="US DOE Joint Genome Institute"/>
            <person name="Copeland A."/>
            <person name="Lucas S."/>
            <person name="Lapidus A."/>
            <person name="Barry K."/>
            <person name="Detter J.C."/>
            <person name="Glavina T."/>
            <person name="Hammon N."/>
            <person name="Israni S."/>
            <person name="Pitluck S."/>
            <person name="Bryant D."/>
            <person name="Schmutz J."/>
            <person name="Larimer F."/>
            <person name="Land M."/>
            <person name="Kyrpides N."/>
            <person name="Ivanova N."/>
            <person name="Richardson P."/>
        </authorList>
    </citation>
    <scope>NUCLEOTIDE SEQUENCE [LARGE SCALE GENOMIC DNA]</scope>
    <source>
        <strain>DSM 273 / BCRC 81028 / 2530</strain>
    </source>
</reference>
<comment type="subunit">
    <text evidence="1">Forms oligomers.</text>
</comment>
<comment type="subcellular location">
    <subcellularLocation>
        <location evidence="1">Cytoplasm</location>
        <location evidence="1">Nucleoid</location>
    </subcellularLocation>
</comment>
<comment type="similarity">
    <text evidence="1">Belongs to the MraZ family.</text>
</comment>
<evidence type="ECO:0000255" key="1">
    <source>
        <dbReference type="HAMAP-Rule" id="MF_01008"/>
    </source>
</evidence>
<evidence type="ECO:0000255" key="2">
    <source>
        <dbReference type="PROSITE-ProRule" id="PRU01076"/>
    </source>
</evidence>
<name>MRAZ_CHLL3</name>
<dbReference type="EMBL" id="CP000096">
    <property type="protein sequence ID" value="ABB24961.1"/>
    <property type="molecule type" value="Genomic_DNA"/>
</dbReference>
<dbReference type="RefSeq" id="WP_011358831.1">
    <property type="nucleotide sequence ID" value="NC_007512.1"/>
</dbReference>
<dbReference type="SMR" id="Q3B120"/>
<dbReference type="STRING" id="319225.Plut_2119"/>
<dbReference type="KEGG" id="plt:Plut_2119"/>
<dbReference type="eggNOG" id="COG2001">
    <property type="taxonomic scope" value="Bacteria"/>
</dbReference>
<dbReference type="HOGENOM" id="CLU_107907_0_5_10"/>
<dbReference type="OrthoDB" id="9807753at2"/>
<dbReference type="Proteomes" id="UP000002709">
    <property type="component" value="Chromosome"/>
</dbReference>
<dbReference type="GO" id="GO:0005737">
    <property type="term" value="C:cytoplasm"/>
    <property type="evidence" value="ECO:0007669"/>
    <property type="project" value="UniProtKB-UniRule"/>
</dbReference>
<dbReference type="GO" id="GO:0009295">
    <property type="term" value="C:nucleoid"/>
    <property type="evidence" value="ECO:0007669"/>
    <property type="project" value="UniProtKB-SubCell"/>
</dbReference>
<dbReference type="GO" id="GO:0003700">
    <property type="term" value="F:DNA-binding transcription factor activity"/>
    <property type="evidence" value="ECO:0007669"/>
    <property type="project" value="UniProtKB-UniRule"/>
</dbReference>
<dbReference type="GO" id="GO:0000976">
    <property type="term" value="F:transcription cis-regulatory region binding"/>
    <property type="evidence" value="ECO:0007669"/>
    <property type="project" value="TreeGrafter"/>
</dbReference>
<dbReference type="GO" id="GO:2000143">
    <property type="term" value="P:negative regulation of DNA-templated transcription initiation"/>
    <property type="evidence" value="ECO:0007669"/>
    <property type="project" value="TreeGrafter"/>
</dbReference>
<dbReference type="CDD" id="cd16321">
    <property type="entry name" value="MraZ_C"/>
    <property type="match status" value="1"/>
</dbReference>
<dbReference type="CDD" id="cd16320">
    <property type="entry name" value="MraZ_N"/>
    <property type="match status" value="1"/>
</dbReference>
<dbReference type="Gene3D" id="3.40.1550.20">
    <property type="entry name" value="Transcriptional regulator MraZ domain"/>
    <property type="match status" value="1"/>
</dbReference>
<dbReference type="HAMAP" id="MF_01008">
    <property type="entry name" value="MraZ"/>
    <property type="match status" value="1"/>
</dbReference>
<dbReference type="InterPro" id="IPR003444">
    <property type="entry name" value="MraZ"/>
</dbReference>
<dbReference type="InterPro" id="IPR035644">
    <property type="entry name" value="MraZ_C"/>
</dbReference>
<dbReference type="InterPro" id="IPR020603">
    <property type="entry name" value="MraZ_dom"/>
</dbReference>
<dbReference type="InterPro" id="IPR035642">
    <property type="entry name" value="MraZ_N"/>
</dbReference>
<dbReference type="InterPro" id="IPR038619">
    <property type="entry name" value="MraZ_sf"/>
</dbReference>
<dbReference type="InterPro" id="IPR007159">
    <property type="entry name" value="SpoVT-AbrB_dom"/>
</dbReference>
<dbReference type="InterPro" id="IPR037914">
    <property type="entry name" value="SpoVT-AbrB_sf"/>
</dbReference>
<dbReference type="NCBIfam" id="NF001476">
    <property type="entry name" value="PRK00326.2-2"/>
    <property type="match status" value="1"/>
</dbReference>
<dbReference type="PANTHER" id="PTHR34701">
    <property type="entry name" value="TRANSCRIPTIONAL REGULATOR MRAZ"/>
    <property type="match status" value="1"/>
</dbReference>
<dbReference type="PANTHER" id="PTHR34701:SF1">
    <property type="entry name" value="TRANSCRIPTIONAL REGULATOR MRAZ"/>
    <property type="match status" value="1"/>
</dbReference>
<dbReference type="Pfam" id="PF02381">
    <property type="entry name" value="MraZ"/>
    <property type="match status" value="2"/>
</dbReference>
<dbReference type="SUPFAM" id="SSF89447">
    <property type="entry name" value="AbrB/MazE/MraZ-like"/>
    <property type="match status" value="1"/>
</dbReference>
<dbReference type="PROSITE" id="PS51740">
    <property type="entry name" value="SPOVT_ABRB"/>
    <property type="match status" value="2"/>
</dbReference>
<accession>Q3B120</accession>
<organism>
    <name type="scientific">Chlorobium luteolum (strain DSM 273 / BCRC 81028 / 2530)</name>
    <name type="common">Pelodictyon luteolum</name>
    <dbReference type="NCBI Taxonomy" id="319225"/>
    <lineage>
        <taxon>Bacteria</taxon>
        <taxon>Pseudomonadati</taxon>
        <taxon>Chlorobiota</taxon>
        <taxon>Chlorobiia</taxon>
        <taxon>Chlorobiales</taxon>
        <taxon>Chlorobiaceae</taxon>
        <taxon>Chlorobium/Pelodictyon group</taxon>
        <taxon>Pelodictyon</taxon>
    </lineage>
</organism>
<keyword id="KW-0963">Cytoplasm</keyword>
<keyword id="KW-0238">DNA-binding</keyword>
<keyword id="KW-1185">Reference proteome</keyword>
<keyword id="KW-0677">Repeat</keyword>
<keyword id="KW-0804">Transcription</keyword>
<keyword id="KW-0805">Transcription regulation</keyword>
<feature type="chain" id="PRO_0000230098" description="Transcriptional regulator MraZ">
    <location>
        <begin position="1"/>
        <end position="153"/>
    </location>
</feature>
<feature type="domain" description="SpoVT-AbrB 1" evidence="2">
    <location>
        <begin position="7"/>
        <end position="61"/>
    </location>
</feature>
<feature type="domain" description="SpoVT-AbrB 2" evidence="2">
    <location>
        <begin position="90"/>
        <end position="133"/>
    </location>
</feature>
<gene>
    <name evidence="1" type="primary">mraZ</name>
    <name type="ordered locus">Plut_2119</name>
</gene>